<dbReference type="EC" id="3.1.4.-" evidence="1"/>
<dbReference type="EC" id="2.7.7.50" evidence="1"/>
<dbReference type="EC" id="2.1.1.56" evidence="1"/>
<dbReference type="EMBL" id="AY277914">
    <property type="protein sequence ID" value="AAQ21041.1"/>
    <property type="molecule type" value="Genomic_RNA"/>
</dbReference>
<dbReference type="EMBL" id="EF583027">
    <property type="protein sequence ID" value="ABU87836.1"/>
    <property type="molecule type" value="Genomic_RNA"/>
</dbReference>
<dbReference type="SMR" id="Q6WNW5"/>
<dbReference type="Proteomes" id="UP000001457">
    <property type="component" value="Genome"/>
</dbReference>
<dbReference type="GO" id="GO:0019013">
    <property type="term" value="C:viral nucleocapsid"/>
    <property type="evidence" value="ECO:0007669"/>
    <property type="project" value="UniProtKB-UniRule"/>
</dbReference>
<dbReference type="GO" id="GO:0005525">
    <property type="term" value="F:GTP binding"/>
    <property type="evidence" value="ECO:0007669"/>
    <property type="project" value="UniProtKB-UniRule"/>
</dbReference>
<dbReference type="GO" id="GO:0016787">
    <property type="term" value="F:hydrolase activity"/>
    <property type="evidence" value="ECO:0007669"/>
    <property type="project" value="UniProtKB-KW"/>
</dbReference>
<dbReference type="GO" id="GO:0004482">
    <property type="term" value="F:mRNA 5'-cap (guanine-N7-)-methyltransferase activity"/>
    <property type="evidence" value="ECO:0007669"/>
    <property type="project" value="UniProtKB-UniRule"/>
</dbReference>
<dbReference type="GO" id="GO:0004484">
    <property type="term" value="F:mRNA guanylyltransferase activity"/>
    <property type="evidence" value="ECO:0007669"/>
    <property type="project" value="UniProtKB-UniRule"/>
</dbReference>
<dbReference type="GO" id="GO:0003723">
    <property type="term" value="F:RNA binding"/>
    <property type="evidence" value="ECO:0007669"/>
    <property type="project" value="UniProtKB-UniRule"/>
</dbReference>
<dbReference type="GO" id="GO:0052170">
    <property type="term" value="P:symbiont-mediated suppression of host innate immune response"/>
    <property type="evidence" value="ECO:0007669"/>
    <property type="project" value="UniProtKB-KW"/>
</dbReference>
<dbReference type="GO" id="GO:0016032">
    <property type="term" value="P:viral process"/>
    <property type="evidence" value="ECO:0007669"/>
    <property type="project" value="UniProtKB-UniRule"/>
</dbReference>
<dbReference type="CDD" id="cd20757">
    <property type="entry name" value="capping_2-OMTase_Rotavirus"/>
    <property type="match status" value="1"/>
</dbReference>
<dbReference type="HAMAP" id="MF_04124">
    <property type="entry name" value="Rota_VP3"/>
    <property type="match status" value="1"/>
</dbReference>
<dbReference type="HAMAP" id="MF_04128">
    <property type="entry name" value="Rota_VP3_A"/>
    <property type="match status" value="1"/>
</dbReference>
<dbReference type="InterPro" id="IPR011181">
    <property type="entry name" value="VP3_Rotav"/>
</dbReference>
<dbReference type="Pfam" id="PF06929">
    <property type="entry name" value="Rotavirus_VP3"/>
    <property type="match status" value="1"/>
</dbReference>
<dbReference type="PIRSF" id="PIRSF004015">
    <property type="entry name" value="LigT_rotavirus"/>
    <property type="match status" value="1"/>
</dbReference>
<dbReference type="PROSITE" id="PS51589">
    <property type="entry name" value="SAM_MT56_VP3"/>
    <property type="match status" value="1"/>
</dbReference>
<organism>
    <name type="scientific">Rotavirus A (strain RVA/Human/United States/DS-1/1976/G2P1B[4])</name>
    <name type="common">RV-A</name>
    <name type="synonym">Rotavirus A (strain DS1)</name>
    <dbReference type="NCBI Taxonomy" id="10950"/>
    <lineage>
        <taxon>Viruses</taxon>
        <taxon>Riboviria</taxon>
        <taxon>Orthornavirae</taxon>
        <taxon>Duplornaviricota</taxon>
        <taxon>Resentoviricetes</taxon>
        <taxon>Reovirales</taxon>
        <taxon>Sedoreoviridae</taxon>
        <taxon>Rotavirus</taxon>
        <taxon>Rotavirus A</taxon>
    </lineage>
</organism>
<proteinExistence type="inferred from homology"/>
<accession>Q6WNW5</accession>
<protein>
    <recommendedName>
        <fullName evidence="1">Protein VP3</fullName>
    </recommendedName>
    <domain>
        <recommendedName>
            <fullName evidence="1">2',5'-phosphodiesterase</fullName>
            <ecNumber evidence="1">3.1.4.-</ecNumber>
        </recommendedName>
    </domain>
    <domain>
        <recommendedName>
            <fullName evidence="1">mRNA guanylyltransferase</fullName>
            <ecNumber evidence="1">2.7.7.50</ecNumber>
        </recommendedName>
    </domain>
    <domain>
        <recommendedName>
            <fullName evidence="1">mRNA (guanine-N(7))-methyltransferase</fullName>
            <ecNumber evidence="1">2.1.1.56</ecNumber>
        </recommendedName>
    </domain>
</protein>
<feature type="chain" id="PRO_0000368085" description="Protein VP3">
    <location>
        <begin position="1"/>
        <end position="835"/>
    </location>
</feature>
<feature type="region of interest" description="N7-methyltransferase activity" evidence="1">
    <location>
        <begin position="171"/>
        <end position="245"/>
    </location>
</feature>
<feature type="region of interest" description="2'-O-methyltransferase activity" evidence="1">
    <location>
        <begin position="246"/>
        <end position="428"/>
    </location>
</feature>
<feature type="region of interest" description="N7-methyltransferase activity" evidence="1">
    <location>
        <begin position="429"/>
        <end position="555"/>
    </location>
</feature>
<feature type="region of interest" description="GTase/RTPase activity" evidence="1">
    <location>
        <begin position="556"/>
        <end position="692"/>
    </location>
</feature>
<feature type="region of interest" description="2'-5'-phosphodiesterase activity" evidence="1">
    <location>
        <begin position="693"/>
        <end position="835"/>
    </location>
</feature>
<feature type="active site" description="For 2'-5'-phosphodiesterase activity" evidence="1">
    <location>
        <position position="718"/>
    </location>
</feature>
<feature type="active site" description="For 2'-5'-phosphodiesterase activity" evidence="1">
    <location>
        <position position="720"/>
    </location>
</feature>
<feature type="active site" description="For 2'-5'-phosphodiesterase activity" evidence="1">
    <location>
        <position position="797"/>
    </location>
</feature>
<feature type="active site" description="For 2'-5'-phosphodiesterase activity" evidence="1">
    <location>
        <position position="799"/>
    </location>
</feature>
<organismHost>
    <name type="scientific">Homo sapiens</name>
    <name type="common">Human</name>
    <dbReference type="NCBI Taxonomy" id="9606"/>
</organismHost>
<evidence type="ECO:0000255" key="1">
    <source>
        <dbReference type="HAMAP-Rule" id="MF_04128"/>
    </source>
</evidence>
<keyword id="KW-0342">GTP-binding</keyword>
<keyword id="KW-0945">Host-virus interaction</keyword>
<keyword id="KW-0378">Hydrolase</keyword>
<keyword id="KW-1090">Inhibition of host innate immune response by virus</keyword>
<keyword id="KW-0489">Methyltransferase</keyword>
<keyword id="KW-0506">mRNA capping</keyword>
<keyword id="KW-0507">mRNA processing</keyword>
<keyword id="KW-0511">Multifunctional enzyme</keyword>
<keyword id="KW-0547">Nucleotide-binding</keyword>
<keyword id="KW-0548">Nucleotidyltransferase</keyword>
<keyword id="KW-0694">RNA-binding</keyword>
<keyword id="KW-0949">S-adenosyl-L-methionine</keyword>
<keyword id="KW-0808">Transferase</keyword>
<keyword id="KW-0899">Viral immunoevasion</keyword>
<keyword id="KW-0946">Virion</keyword>
<comment type="function">
    <text evidence="1">Multifunctional enzyme involved in mRNA capping. Catalyzes the formation of the 5' cap structure on the viral plus-strand transcripts. Specifically binds to GTP and displays guanylyltransferase and methyltransferase activities. Has affinity for ssRNA but not for dsRNA. Capping activity is non-specific and caps RNAs that initiate with either a G or an A residue. Together with VP1 polymerase, forms a VP1-VP3 complex positioned near the channels situated at each of the five-fold vertices of the core. Following infection, the outermost layer of the virus is lost, leaving a double-layered particle (DLP) made up of the core and VP6 shell. VP1 then catalyzes the transcription of fully conservative plus-strand genomic RNAs that are capped by VP3 and extruded through the DLP's channels into the cytoplasm where they function as mRNAs for translation of viral proteins. DLPs probably have an RNA triphosphatase activity as well, whereas open cores do not.</text>
</comment>
<comment type="function">
    <text evidence="1">Counteracts the host innate immune response thanks to its phosphodiesterase that degrades the 5'-triphosphorylated, 2'-5' linked adenylate oligomers produced by the host cell IFN-inducible 2',5'-oligoadenylate synthetase (OAS). The host RNaseL is therefore not activated.</text>
</comment>
<comment type="catalytic activity">
    <reaction evidence="1">
        <text>a 5'-end diphospho-ribonucleoside in mRNA + GTP + H(+) = a 5'-end (5'-triphosphoguanosine)-ribonucleoside in mRNA + diphosphate</text>
        <dbReference type="Rhea" id="RHEA:67012"/>
        <dbReference type="Rhea" id="RHEA-COMP:17165"/>
        <dbReference type="Rhea" id="RHEA-COMP:17166"/>
        <dbReference type="ChEBI" id="CHEBI:15378"/>
        <dbReference type="ChEBI" id="CHEBI:33019"/>
        <dbReference type="ChEBI" id="CHEBI:37565"/>
        <dbReference type="ChEBI" id="CHEBI:167616"/>
        <dbReference type="ChEBI" id="CHEBI:167617"/>
        <dbReference type="EC" id="2.7.7.50"/>
    </reaction>
</comment>
<comment type="catalytic activity">
    <reaction evidence="1">
        <text>a 5'-end (5'-triphosphoguanosine)-ribonucleoside in mRNA + S-adenosyl-L-methionine = a 5'-end (N(7)-methyl 5'-triphosphoguanosine)-ribonucleoside in mRNA + S-adenosyl-L-homocysteine</text>
        <dbReference type="Rhea" id="RHEA:67008"/>
        <dbReference type="Rhea" id="RHEA-COMP:17166"/>
        <dbReference type="Rhea" id="RHEA-COMP:17167"/>
        <dbReference type="ChEBI" id="CHEBI:57856"/>
        <dbReference type="ChEBI" id="CHEBI:59789"/>
        <dbReference type="ChEBI" id="CHEBI:156461"/>
        <dbReference type="ChEBI" id="CHEBI:167617"/>
        <dbReference type="EC" id="2.1.1.56"/>
    </reaction>
</comment>
<comment type="catalytic activity">
    <reaction evidence="1">
        <text>5'-triphosphoadenylyl-(2'-&gt;5')-adenylyl-(2'-&gt;5')-adenosine + 2 H2O = 2 AMP + ATP + 2 H(+)</text>
        <dbReference type="Rhea" id="RHEA:45964"/>
        <dbReference type="ChEBI" id="CHEBI:15377"/>
        <dbReference type="ChEBI" id="CHEBI:15378"/>
        <dbReference type="ChEBI" id="CHEBI:30616"/>
        <dbReference type="ChEBI" id="CHEBI:67143"/>
        <dbReference type="ChEBI" id="CHEBI:456215"/>
    </reaction>
</comment>
<comment type="subunit">
    <text evidence="1">Interacts with VP1. Interacts with VP2.</text>
</comment>
<comment type="subcellular location">
    <subcellularLocation>
        <location evidence="1">Virion</location>
    </subcellularLocation>
    <text evidence="1">Attached inside the inner capsid as a minor component. There are about 11 to 12 copies per virion.</text>
</comment>
<comment type="domain">
    <text evidence="1">Contains a bipartite N7-methyltransferase domain, a 2'-O-methyltransferase domain and a GTase/RTPase domain. The C-terminus contains a phosphodiesterase domain that degrades the 5'-triphosphorylated, 2'-5' linked adenylate oligomers produced by the host cell in response to IFN stimulation.</text>
</comment>
<comment type="similarity">
    <text evidence="1">Belongs to the rotavirus VP3 family.</text>
</comment>
<sequence>MKVLALRHSVAQIYADTQVYTHDDSKDDYENAFLISNLTTHNILYLNYSVKTLQILNKSGIAAIEIQKIDELFTLIRCNFTYDYIDDVVYLHDYSYYANNEIRTDQYWVTKTNIEDYLLPGWKLTYVGYNGSDTRGHYNFSFRCQNAATDDDVIIEYIYSNELDFQNFILKKIKERMTTSLPIARLSNRVFRDKLFKTLSVNHDKVVNVGPRNESMFTFLDHPSIKQFSNGPYLVKDTIKLKQERWLGKRLSQFDIGQYKNMLNVLTTLYQYYDMYHEKPIIYMIGSAPSYWIYDVKQYSDLKFETWDPLDTPYSNLHHKELFYINDVQKLKDNSILYIDIRTDRGNMDWKEWRKVVEGQTADNLHIAYKYLSTGKAKICCVKMTAMDVELPISAKLLHHPTTEIRSEFYLMMDIWDSKNIKRFIPKGVLYSYINNTITENVFIQQPFKLKTLKNEYVIALYALSNDLNNREDVVKLINNQKRALITVRINNTFKDEPKVGFKNIYDWTFLPTDFEMNGSIITSYDGCLGIFGLSISLASKPTGNNHLFILSGTDKYFKLDQFANHMSISRRSHQIRFSESATSYSGYIFRDLSNNNFNLIGTNVENSVSGHVYNALIYYRYNYSFDLKRWIYLHSTGKASIEGGKYYEHAPIELIYACRSAREFAKLQDDLTVLRYSNEIENYINKVYSITYADDPNYFIGIKFKNIPYKYNVKVPHLTFGVLNISEQMLPDAIAILKKFKNELFGMDITTSYTYMLSDEVYVANISGVLSTYFKIYNAFYKEQITFGQSRMFIPHVTLSFSNEKTVRIDTTKLYIDSIYLRKIKGDTVFDMTE</sequence>
<reference key="1">
    <citation type="journal article" date="2004" name="J. Gen. Virol.">
        <title>Sequence analysis of the guanylyltransferase (VP3) of group A rotaviruses.</title>
        <authorList>
            <person name="Cook J.P."/>
            <person name="McCrae M.A."/>
        </authorList>
    </citation>
    <scope>NUCLEOTIDE SEQUENCE [GENOMIC RNA]</scope>
</reference>
<reference key="2">
    <citation type="journal article" date="2008" name="J. Virol.">
        <title>Full genome-based classification of rotaviruses reveals a common origin between human Wa-Like and porcine rotavirus strains and human DS-1-like and bovine rotavirus strains.</title>
        <authorList>
            <person name="Matthijnssens J."/>
            <person name="Ciarlet M."/>
            <person name="Heiman E.M."/>
            <person name="Arijs I."/>
            <person name="Delbeke T."/>
            <person name="McDonald S.M."/>
            <person name="Palombo E.A."/>
            <person name="Iturriza-Gomara M."/>
            <person name="Maes P."/>
            <person name="Patton J.T."/>
            <person name="Rahman M."/>
            <person name="Van Ranst M."/>
        </authorList>
    </citation>
    <scope>NUCLEOTIDE SEQUENCE [GENOMIC RNA]</scope>
</reference>
<name>VP3_ROTHD</name>